<keyword id="KW-1185">Reference proteome</keyword>
<keyword id="KW-0687">Ribonucleoprotein</keyword>
<keyword id="KW-0689">Ribosomal protein</keyword>
<protein>
    <recommendedName>
        <fullName evidence="1">Small ribosomal subunit protein eS17</fullName>
    </recommendedName>
    <alternativeName>
        <fullName evidence="2">30S ribosomal protein S17e</fullName>
    </alternativeName>
</protein>
<proteinExistence type="inferred from homology"/>
<accession>Q2NHW6</accession>
<name>RS17E_METST</name>
<gene>
    <name evidence="1" type="primary">rps17e</name>
    <name type="ordered locus">Msp_0106</name>
</gene>
<evidence type="ECO:0000255" key="1">
    <source>
        <dbReference type="HAMAP-Rule" id="MF_00511"/>
    </source>
</evidence>
<evidence type="ECO:0000305" key="2"/>
<organism>
    <name type="scientific">Methanosphaera stadtmanae (strain ATCC 43021 / DSM 3091 / JCM 11832 / MCB-3)</name>
    <dbReference type="NCBI Taxonomy" id="339860"/>
    <lineage>
        <taxon>Archaea</taxon>
        <taxon>Methanobacteriati</taxon>
        <taxon>Methanobacteriota</taxon>
        <taxon>Methanomada group</taxon>
        <taxon>Methanobacteria</taxon>
        <taxon>Methanobacteriales</taxon>
        <taxon>Methanobacteriaceae</taxon>
        <taxon>Methanosphaera</taxon>
    </lineage>
</organism>
<comment type="similarity">
    <text evidence="1">Belongs to the eukaryotic ribosomal protein eS17 family.</text>
</comment>
<reference key="1">
    <citation type="journal article" date="2006" name="J. Bacteriol.">
        <title>The genome sequence of Methanosphaera stadtmanae reveals why this human intestinal archaeon is restricted to methanol and H2 for methane formation and ATP synthesis.</title>
        <authorList>
            <person name="Fricke W.F."/>
            <person name="Seedorf H."/>
            <person name="Henne A."/>
            <person name="Kruer M."/>
            <person name="Liesegang H."/>
            <person name="Hedderich R."/>
            <person name="Gottschalk G."/>
            <person name="Thauer R.K."/>
        </authorList>
    </citation>
    <scope>NUCLEOTIDE SEQUENCE [LARGE SCALE GENOMIC DNA]</scope>
    <source>
        <strain>ATCC 43021 / DSM 3091 / JCM 11832 / MCB-3</strain>
    </source>
</reference>
<feature type="chain" id="PRO_0000258602" description="Small ribosomal subunit protein eS17">
    <location>
        <begin position="1"/>
        <end position="60"/>
    </location>
</feature>
<sequence>MGNIRTTFVKRTAKELLELHGDKFNSDFENNKQVVAEYSTVSTKHLRNQIAGYATHLLEQ</sequence>
<dbReference type="EMBL" id="CP000102">
    <property type="protein sequence ID" value="ABC56525.1"/>
    <property type="molecule type" value="Genomic_DNA"/>
</dbReference>
<dbReference type="RefSeq" id="WP_011405724.1">
    <property type="nucleotide sequence ID" value="NC_007681.1"/>
</dbReference>
<dbReference type="SMR" id="Q2NHW6"/>
<dbReference type="STRING" id="339860.Msp_0106"/>
<dbReference type="KEGG" id="mst:Msp_0106"/>
<dbReference type="eggNOG" id="arCOG01885">
    <property type="taxonomic scope" value="Archaea"/>
</dbReference>
<dbReference type="HOGENOM" id="CLU_176720_0_1_2"/>
<dbReference type="OrthoDB" id="52479at2157"/>
<dbReference type="Proteomes" id="UP000001931">
    <property type="component" value="Chromosome"/>
</dbReference>
<dbReference type="GO" id="GO:0005829">
    <property type="term" value="C:cytosol"/>
    <property type="evidence" value="ECO:0007669"/>
    <property type="project" value="UniProtKB-ARBA"/>
</dbReference>
<dbReference type="GO" id="GO:1990904">
    <property type="term" value="C:ribonucleoprotein complex"/>
    <property type="evidence" value="ECO:0007669"/>
    <property type="project" value="UniProtKB-KW"/>
</dbReference>
<dbReference type="GO" id="GO:0005840">
    <property type="term" value="C:ribosome"/>
    <property type="evidence" value="ECO:0007669"/>
    <property type="project" value="UniProtKB-KW"/>
</dbReference>
<dbReference type="GO" id="GO:0003735">
    <property type="term" value="F:structural constituent of ribosome"/>
    <property type="evidence" value="ECO:0007669"/>
    <property type="project" value="InterPro"/>
</dbReference>
<dbReference type="GO" id="GO:0006412">
    <property type="term" value="P:translation"/>
    <property type="evidence" value="ECO:0007669"/>
    <property type="project" value="UniProtKB-UniRule"/>
</dbReference>
<dbReference type="Gene3D" id="1.10.60.20">
    <property type="entry name" value="Ribosomal protein S17e-like"/>
    <property type="match status" value="1"/>
</dbReference>
<dbReference type="HAMAP" id="MF_00511">
    <property type="entry name" value="Ribosomal_eS17"/>
    <property type="match status" value="1"/>
</dbReference>
<dbReference type="InterPro" id="IPR001210">
    <property type="entry name" value="Ribosomal_eS17"/>
</dbReference>
<dbReference type="InterPro" id="IPR018273">
    <property type="entry name" value="Ribosomal_eS17_CS"/>
</dbReference>
<dbReference type="InterPro" id="IPR036401">
    <property type="entry name" value="Ribosomal_eS17_sf"/>
</dbReference>
<dbReference type="NCBIfam" id="NF002242">
    <property type="entry name" value="PRK01151.1"/>
    <property type="match status" value="1"/>
</dbReference>
<dbReference type="PANTHER" id="PTHR10732">
    <property type="entry name" value="40S RIBOSOMAL PROTEIN S17"/>
    <property type="match status" value="1"/>
</dbReference>
<dbReference type="PANTHER" id="PTHR10732:SF0">
    <property type="entry name" value="40S RIBOSOMAL PROTEIN S17"/>
    <property type="match status" value="1"/>
</dbReference>
<dbReference type="Pfam" id="PF00833">
    <property type="entry name" value="Ribosomal_S17e"/>
    <property type="match status" value="1"/>
</dbReference>
<dbReference type="SUPFAM" id="SSF116820">
    <property type="entry name" value="Rps17e-like"/>
    <property type="match status" value="1"/>
</dbReference>
<dbReference type="PROSITE" id="PS00712">
    <property type="entry name" value="RIBOSOMAL_S17E"/>
    <property type="match status" value="1"/>
</dbReference>